<protein>
    <recommendedName>
        <fullName>Melanocyte-stimulating hormone receptor</fullName>
        <shortName>MSH-R</shortName>
    </recommendedName>
    <alternativeName>
        <fullName>Melanocortin receptor 1</fullName>
        <shortName>MC1-R</shortName>
    </alternativeName>
</protein>
<gene>
    <name type="primary">MC1R</name>
</gene>
<comment type="function">
    <text evidence="1">Receptor for MSH (alpha, beta and gamma) and ACTH. The activity of this receptor is mediated by G proteins which activate adenylate cyclase. Mediates melanogenesis, the production of eumelanin (black/brown) and phaeomelanin (red/yellow), via regulation of cAMP signaling in melanocytes.</text>
</comment>
<comment type="subunit">
    <text evidence="1">Interacts with MGRN1, but does not undergo MGRN1-mediated ubiquitination; this interaction competes with GNAS-binding and thus inhibits agonist-induced cAMP production. Interacts with OPN3; the interaction results in a decrease in MC1R-mediated cAMP signaling and ultimately a decrease in melanin production in melanocytes.</text>
</comment>
<comment type="subcellular location">
    <subcellularLocation>
        <location evidence="1">Cell membrane</location>
        <topology evidence="2">Multi-pass membrane protein</topology>
    </subcellularLocation>
</comment>
<comment type="similarity">
    <text evidence="3">Belongs to the G-protein coupled receptor 1 family.</text>
</comment>
<dbReference type="EMBL" id="AY205102">
    <property type="protein sequence ID" value="AAP30976.1"/>
    <property type="molecule type" value="Genomic_DNA"/>
</dbReference>
<dbReference type="SMR" id="Q864J5"/>
<dbReference type="GlyCosmos" id="Q864J5">
    <property type="glycosylation" value="1 site, No reported glycans"/>
</dbReference>
<dbReference type="GO" id="GO:0005886">
    <property type="term" value="C:plasma membrane"/>
    <property type="evidence" value="ECO:0000250"/>
    <property type="project" value="UniProtKB"/>
</dbReference>
<dbReference type="GO" id="GO:0004980">
    <property type="term" value="F:melanocyte-stimulating hormone receptor activity"/>
    <property type="evidence" value="ECO:0007669"/>
    <property type="project" value="InterPro"/>
</dbReference>
<dbReference type="GO" id="GO:0007189">
    <property type="term" value="P:adenylate cyclase-activating G protein-coupled receptor signaling pathway"/>
    <property type="evidence" value="ECO:0007669"/>
    <property type="project" value="UniProtKB-ARBA"/>
</dbReference>
<dbReference type="CDD" id="cd15351">
    <property type="entry name" value="7tmA_MC1R"/>
    <property type="match status" value="1"/>
</dbReference>
<dbReference type="FunFam" id="1.20.1070.10:FF:000211">
    <property type="entry name" value="Melanocyte-stimulating hormone receptor"/>
    <property type="match status" value="1"/>
</dbReference>
<dbReference type="Gene3D" id="1.20.1070.10">
    <property type="entry name" value="Rhodopsin 7-helix transmembrane proteins"/>
    <property type="match status" value="1"/>
</dbReference>
<dbReference type="InterPro" id="IPR000276">
    <property type="entry name" value="GPCR_Rhodpsn"/>
</dbReference>
<dbReference type="InterPro" id="IPR017452">
    <property type="entry name" value="GPCR_Rhodpsn_7TM"/>
</dbReference>
<dbReference type="InterPro" id="IPR001671">
    <property type="entry name" value="Melcrt_ACTH_rcpt"/>
</dbReference>
<dbReference type="InterPro" id="IPR000761">
    <property type="entry name" value="MSH_rcpt"/>
</dbReference>
<dbReference type="PANTHER" id="PTHR22750">
    <property type="entry name" value="G-PROTEIN COUPLED RECEPTOR"/>
    <property type="match status" value="1"/>
</dbReference>
<dbReference type="Pfam" id="PF00001">
    <property type="entry name" value="7tm_1"/>
    <property type="match status" value="2"/>
</dbReference>
<dbReference type="PRINTS" id="PR00237">
    <property type="entry name" value="GPCRRHODOPSN"/>
</dbReference>
<dbReference type="PRINTS" id="PR00534">
    <property type="entry name" value="MCRFAMILY"/>
</dbReference>
<dbReference type="PRINTS" id="PR00536">
    <property type="entry name" value="MELNOCYTESHR"/>
</dbReference>
<dbReference type="SMART" id="SM01381">
    <property type="entry name" value="7TM_GPCR_Srsx"/>
    <property type="match status" value="1"/>
</dbReference>
<dbReference type="SUPFAM" id="SSF81321">
    <property type="entry name" value="Family A G protein-coupled receptor-like"/>
    <property type="match status" value="1"/>
</dbReference>
<dbReference type="PROSITE" id="PS00237">
    <property type="entry name" value="G_PROTEIN_RECEP_F1_1"/>
    <property type="match status" value="1"/>
</dbReference>
<dbReference type="PROSITE" id="PS50262">
    <property type="entry name" value="G_PROTEIN_RECEP_F1_2"/>
    <property type="match status" value="1"/>
</dbReference>
<reference key="1">
    <citation type="journal article" date="2003" name="Am. J. Phys. Anthropol.">
        <title>Evolution of a pigmentation gene, the melanocortin-1 receptor, in primates.</title>
        <authorList>
            <person name="Mundy N.I."/>
            <person name="Kelly J."/>
        </authorList>
    </citation>
    <scope>NUCLEOTIDE SEQUENCE [GENOMIC DNA]</scope>
    <source>
        <strain>Isolate 3</strain>
    </source>
</reference>
<feature type="chain" id="PRO_0000069829" description="Melanocyte-stimulating hormone receptor">
    <location>
        <begin position="1"/>
        <end position="317"/>
    </location>
</feature>
<feature type="topological domain" description="Extracellular" evidence="2">
    <location>
        <begin position="1"/>
        <end position="37"/>
    </location>
</feature>
<feature type="transmembrane region" description="Helical; Name=1" evidence="2">
    <location>
        <begin position="38"/>
        <end position="63"/>
    </location>
</feature>
<feature type="topological domain" description="Cytoplasmic" evidence="2">
    <location>
        <begin position="64"/>
        <end position="72"/>
    </location>
</feature>
<feature type="transmembrane region" description="Helical; Name=2" evidence="2">
    <location>
        <begin position="73"/>
        <end position="93"/>
    </location>
</feature>
<feature type="topological domain" description="Extracellular" evidence="2">
    <location>
        <begin position="94"/>
        <end position="118"/>
    </location>
</feature>
<feature type="transmembrane region" description="Helical; Name=3" evidence="2">
    <location>
        <begin position="119"/>
        <end position="140"/>
    </location>
</feature>
<feature type="topological domain" description="Cytoplasmic" evidence="2">
    <location>
        <begin position="141"/>
        <end position="163"/>
    </location>
</feature>
<feature type="transmembrane region" description="Helical; Name=4" evidence="2">
    <location>
        <begin position="164"/>
        <end position="183"/>
    </location>
</feature>
<feature type="topological domain" description="Extracellular" evidence="2">
    <location>
        <begin position="184"/>
        <end position="191"/>
    </location>
</feature>
<feature type="transmembrane region" description="Helical; Name=5" evidence="2">
    <location>
        <begin position="192"/>
        <end position="211"/>
    </location>
</feature>
<feature type="topological domain" description="Cytoplasmic" evidence="2">
    <location>
        <begin position="212"/>
        <end position="240"/>
    </location>
</feature>
<feature type="transmembrane region" description="Helical; Name=6" evidence="2">
    <location>
        <begin position="241"/>
        <end position="266"/>
    </location>
</feature>
<feature type="topological domain" description="Extracellular" evidence="2">
    <location>
        <begin position="267"/>
        <end position="279"/>
    </location>
</feature>
<feature type="transmembrane region" description="Helical; Name=7" evidence="2">
    <location>
        <begin position="280"/>
        <end position="300"/>
    </location>
</feature>
<feature type="topological domain" description="Cytoplasmic" evidence="2">
    <location>
        <begin position="301"/>
        <end position="317"/>
    </location>
</feature>
<feature type="lipid moiety-binding region" description="S-palmitoyl cysteine" evidence="2">
    <location>
        <position position="315"/>
    </location>
</feature>
<feature type="glycosylation site" description="N-linked (GlcNAc...) asparagine" evidence="2">
    <location>
        <position position="29"/>
    </location>
</feature>
<accession>Q864J5</accession>
<organism>
    <name type="scientific">Macaca nigra</name>
    <name type="common">Celebes black macaque</name>
    <name type="synonym">Crested black macaque</name>
    <dbReference type="NCBI Taxonomy" id="54600"/>
    <lineage>
        <taxon>Eukaryota</taxon>
        <taxon>Metazoa</taxon>
        <taxon>Chordata</taxon>
        <taxon>Craniata</taxon>
        <taxon>Vertebrata</taxon>
        <taxon>Euteleostomi</taxon>
        <taxon>Mammalia</taxon>
        <taxon>Eutheria</taxon>
        <taxon>Euarchontoglires</taxon>
        <taxon>Primates</taxon>
        <taxon>Haplorrhini</taxon>
        <taxon>Catarrhini</taxon>
        <taxon>Cercopithecidae</taxon>
        <taxon>Cercopithecinae</taxon>
        <taxon>Macaca</taxon>
    </lineage>
</organism>
<keyword id="KW-1003">Cell membrane</keyword>
<keyword id="KW-0297">G-protein coupled receptor</keyword>
<keyword id="KW-0325">Glycoprotein</keyword>
<keyword id="KW-0449">Lipoprotein</keyword>
<keyword id="KW-0472">Membrane</keyword>
<keyword id="KW-0564">Palmitate</keyword>
<keyword id="KW-0675">Receptor</keyword>
<keyword id="KW-0807">Transducer</keyword>
<keyword id="KW-0812">Transmembrane</keyword>
<keyword id="KW-1133">Transmembrane helix</keyword>
<name>MSHR_MACNG</name>
<proteinExistence type="inferred from homology"/>
<sequence length="317" mass="34780">MRVQGSQRRLLGSLNSTPTATPHLGLAANQTGARCLEVSIPDGLFLSLGLVSLVENVLVVTAIAKNRNLHSPMYCFICCLALSDLLVSGSNMLETAVTLLLEAGALAARAAVVQQLDNVIDVITCSSMLSSLCFLGAIAVDRYISIFYALRYHSIVTLPRARRAIAAIWVASVLCSTLFIAYYDHAAVLLCLVVFFLAMLVLMAVLYVHMLARACQHAQGIARLHKRQRLAHQGFGLKGAATLTILLGIFFLCWGPFFLHLTLIVLCPQHPTCSCIFKNFNLFLALIICNAIIDPLIYAFRSQELRRTLKEVLLCSW</sequence>
<evidence type="ECO:0000250" key="1">
    <source>
        <dbReference type="UniProtKB" id="Q01726"/>
    </source>
</evidence>
<evidence type="ECO:0000255" key="2"/>
<evidence type="ECO:0000255" key="3">
    <source>
        <dbReference type="PROSITE-ProRule" id="PRU00521"/>
    </source>
</evidence>